<dbReference type="EMBL" id="AF195651">
    <property type="protein sequence ID" value="AAK34885.1"/>
    <property type="molecule type" value="mRNA"/>
</dbReference>
<dbReference type="EMBL" id="AF315598">
    <property type="protein sequence ID" value="AAL26878.1"/>
    <property type="molecule type" value="mRNA"/>
</dbReference>
<dbReference type="EMBL" id="AY259835">
    <property type="protein sequence ID" value="AAP85624.1"/>
    <property type="molecule type" value="mRNA"/>
</dbReference>
<dbReference type="EMBL" id="AY259836">
    <property type="protein sequence ID" value="AAP85625.1"/>
    <property type="molecule type" value="mRNA"/>
</dbReference>
<dbReference type="EMBL" id="AF329277">
    <property type="protein sequence ID" value="AAL56993.1"/>
    <property type="molecule type" value="mRNA"/>
</dbReference>
<dbReference type="EMBL" id="AK127540">
    <property type="protein sequence ID" value="BAG54519.1"/>
    <property type="molecule type" value="mRNA"/>
</dbReference>
<dbReference type="EMBL" id="AC087884">
    <property type="status" value="NOT_ANNOTATED_CDS"/>
    <property type="molecule type" value="Genomic_DNA"/>
</dbReference>
<dbReference type="EMBL" id="CH471111">
    <property type="protein sequence ID" value="EAW58167.1"/>
    <property type="molecule type" value="Genomic_DNA"/>
</dbReference>
<dbReference type="EMBL" id="CH471111">
    <property type="protein sequence ID" value="EAW58169.1"/>
    <property type="molecule type" value="Genomic_DNA"/>
</dbReference>
<dbReference type="EMBL" id="CH471111">
    <property type="protein sequence ID" value="EAW58170.1"/>
    <property type="molecule type" value="Genomic_DNA"/>
</dbReference>
<dbReference type="EMBL" id="BC000395">
    <property type="protein sequence ID" value="AAH00395.2"/>
    <property type="molecule type" value="mRNA"/>
</dbReference>
<dbReference type="EMBL" id="BC019274">
    <property type="protein sequence ID" value="AAH19274.1"/>
    <property type="molecule type" value="mRNA"/>
</dbReference>
<dbReference type="EMBL" id="BC064943">
    <property type="protein sequence ID" value="AAH64943.1"/>
    <property type="molecule type" value="mRNA"/>
</dbReference>
<dbReference type="EMBL" id="AL050286">
    <property type="protein sequence ID" value="CAB43387.2"/>
    <property type="molecule type" value="mRNA"/>
</dbReference>
<dbReference type="CCDS" id="CCDS44883.1">
    <molecule id="Q6P1Q0-2"/>
</dbReference>
<dbReference type="CCDS" id="CCDS58231.1">
    <molecule id="Q6P1Q0-7"/>
</dbReference>
<dbReference type="CCDS" id="CCDS8806.1">
    <molecule id="Q6P1Q0-1"/>
</dbReference>
<dbReference type="PIR" id="T08763">
    <property type="entry name" value="T08763"/>
</dbReference>
<dbReference type="RefSeq" id="NP_001230618.1">
    <molecule id="Q6P1Q0-7"/>
    <property type="nucleotide sequence ID" value="NM_001243689.2"/>
</dbReference>
<dbReference type="RefSeq" id="NP_001338241.1">
    <molecule id="Q6P1Q0-2"/>
    <property type="nucleotide sequence ID" value="NM_001351312.2"/>
</dbReference>
<dbReference type="RefSeq" id="NP_001338242.1">
    <molecule id="Q6P1Q0-4"/>
    <property type="nucleotide sequence ID" value="NM_001351313.2"/>
</dbReference>
<dbReference type="RefSeq" id="NP_001338248.1">
    <molecule id="Q6P1Q0-2"/>
    <property type="nucleotide sequence ID" value="NM_001351319.2"/>
</dbReference>
<dbReference type="RefSeq" id="NP_001338263.1">
    <molecule id="Q6P1Q0-4"/>
    <property type="nucleotide sequence ID" value="NM_001351334.2"/>
</dbReference>
<dbReference type="RefSeq" id="NP_001338264.1">
    <molecule id="Q6P1Q0-4"/>
    <property type="nucleotide sequence ID" value="NM_001351335.2"/>
</dbReference>
<dbReference type="RefSeq" id="NP_001338265.1">
    <molecule id="Q6P1Q0-4"/>
    <property type="nucleotide sequence ID" value="NM_001351336.2"/>
</dbReference>
<dbReference type="RefSeq" id="NP_056231.3">
    <molecule id="Q6P1Q0-1"/>
    <property type="nucleotide sequence ID" value="NM_015416.4"/>
</dbReference>
<dbReference type="RefSeq" id="XP_006719402.1">
    <property type="nucleotide sequence ID" value="XM_006719339.1"/>
</dbReference>
<dbReference type="RefSeq" id="XP_006719403.1">
    <property type="nucleotide sequence ID" value="XM_006719340.1"/>
</dbReference>
<dbReference type="SMR" id="Q6P1Q0"/>
<dbReference type="BioGRID" id="117390">
    <property type="interactions" value="79"/>
</dbReference>
<dbReference type="FunCoup" id="Q6P1Q0">
    <property type="interactions" value="3021"/>
</dbReference>
<dbReference type="IntAct" id="Q6P1Q0">
    <property type="interactions" value="62"/>
</dbReference>
<dbReference type="MINT" id="Q6P1Q0"/>
<dbReference type="STRING" id="9606.ENSP00000389903"/>
<dbReference type="TCDB" id="2.A.97.1.7">
    <property type="family name" value="the mitochondrial inner membrane k(+)/h(+) and ca(2+)/h(+) exchanger (letm1) family"/>
</dbReference>
<dbReference type="GlyGen" id="Q6P1Q0">
    <property type="glycosylation" value="1 site"/>
</dbReference>
<dbReference type="iPTMnet" id="Q6P1Q0"/>
<dbReference type="PhosphoSitePlus" id="Q6P1Q0"/>
<dbReference type="SwissPalm" id="Q6P1Q0"/>
<dbReference type="BioMuta" id="LETMD1"/>
<dbReference type="DMDM" id="74737159"/>
<dbReference type="jPOST" id="Q6P1Q0"/>
<dbReference type="MassIVE" id="Q6P1Q0"/>
<dbReference type="PaxDb" id="9606-ENSP00000389903"/>
<dbReference type="PeptideAtlas" id="Q6P1Q0"/>
<dbReference type="ProteomicsDB" id="3815"/>
<dbReference type="ProteomicsDB" id="66860">
    <molecule id="Q6P1Q0-1"/>
</dbReference>
<dbReference type="ProteomicsDB" id="66861">
    <molecule id="Q6P1Q0-2"/>
</dbReference>
<dbReference type="ProteomicsDB" id="66862">
    <molecule id="Q6P1Q0-3"/>
</dbReference>
<dbReference type="ProteomicsDB" id="66863">
    <molecule id="Q6P1Q0-4"/>
</dbReference>
<dbReference type="ProteomicsDB" id="66864">
    <molecule id="Q6P1Q0-5"/>
</dbReference>
<dbReference type="ProteomicsDB" id="66865">
    <molecule id="Q6P1Q0-6"/>
</dbReference>
<dbReference type="Pumba" id="Q6P1Q0"/>
<dbReference type="Antibodypedia" id="26304">
    <property type="antibodies" value="158 antibodies from 21 providers"/>
</dbReference>
<dbReference type="DNASU" id="25875"/>
<dbReference type="Ensembl" id="ENST00000262055.9">
    <molecule id="Q6P1Q0-1"/>
    <property type="protein sequence ID" value="ENSP00000262055.4"/>
    <property type="gene ID" value="ENSG00000050426.16"/>
</dbReference>
<dbReference type="Ensembl" id="ENST00000418425.6">
    <molecule id="Q6P1Q0-7"/>
    <property type="protein sequence ID" value="ENSP00000389903.2"/>
    <property type="gene ID" value="ENSG00000050426.16"/>
</dbReference>
<dbReference type="Ensembl" id="ENST00000550100.5">
    <molecule id="Q6P1Q0-3"/>
    <property type="protein sequence ID" value="ENSP00000447047.1"/>
    <property type="gene ID" value="ENSG00000050426.16"/>
</dbReference>
<dbReference type="Ensembl" id="ENST00000550929.5">
    <molecule id="Q6P1Q0-2"/>
    <property type="protein sequence ID" value="ENSP00000450163.1"/>
    <property type="gene ID" value="ENSG00000050426.16"/>
</dbReference>
<dbReference type="GeneID" id="25875"/>
<dbReference type="KEGG" id="hsa:25875"/>
<dbReference type="MANE-Select" id="ENST00000262055.9">
    <property type="protein sequence ID" value="ENSP00000262055.4"/>
    <property type="RefSeq nucleotide sequence ID" value="NM_015416.5"/>
    <property type="RefSeq protein sequence ID" value="NP_056231.3"/>
</dbReference>
<dbReference type="UCSC" id="uc001rxl.4">
    <molecule id="Q6P1Q0-1"/>
    <property type="organism name" value="human"/>
</dbReference>
<dbReference type="AGR" id="HGNC:24241"/>
<dbReference type="CTD" id="25875"/>
<dbReference type="DisGeNET" id="25875"/>
<dbReference type="GeneCards" id="LETMD1"/>
<dbReference type="HGNC" id="HGNC:24241">
    <property type="gene designation" value="LETMD1"/>
</dbReference>
<dbReference type="HPA" id="ENSG00000050426">
    <property type="expression patterns" value="Low tissue specificity"/>
</dbReference>
<dbReference type="MIM" id="619070">
    <property type="type" value="gene"/>
</dbReference>
<dbReference type="neXtProt" id="NX_Q6P1Q0"/>
<dbReference type="OpenTargets" id="ENSG00000050426"/>
<dbReference type="PharmGKB" id="PA134914870"/>
<dbReference type="VEuPathDB" id="HostDB:ENSG00000050426"/>
<dbReference type="eggNOG" id="KOG4263">
    <property type="taxonomic scope" value="Eukaryota"/>
</dbReference>
<dbReference type="GeneTree" id="ENSGT00950000183167"/>
<dbReference type="HOGENOM" id="CLU_049801_0_0_1"/>
<dbReference type="InParanoid" id="Q6P1Q0"/>
<dbReference type="OMA" id="EGGVHNM"/>
<dbReference type="OrthoDB" id="73691at2759"/>
<dbReference type="PAN-GO" id="Q6P1Q0">
    <property type="GO annotations" value="0 GO annotations based on evolutionary models"/>
</dbReference>
<dbReference type="PhylomeDB" id="Q6P1Q0"/>
<dbReference type="TreeFam" id="TF314047"/>
<dbReference type="PathwayCommons" id="Q6P1Q0"/>
<dbReference type="SignaLink" id="Q6P1Q0"/>
<dbReference type="BioGRID-ORCS" id="25875">
    <property type="hits" value="17 hits in 1155 CRISPR screens"/>
</dbReference>
<dbReference type="ChiTaRS" id="LETMD1">
    <property type="organism name" value="human"/>
</dbReference>
<dbReference type="GeneWiki" id="LETMD1"/>
<dbReference type="GenomeRNAi" id="25875"/>
<dbReference type="Pharos" id="Q6P1Q0">
    <property type="development level" value="Tbio"/>
</dbReference>
<dbReference type="PRO" id="PR:Q6P1Q0"/>
<dbReference type="Proteomes" id="UP000005640">
    <property type="component" value="Chromosome 12"/>
</dbReference>
<dbReference type="RNAct" id="Q6P1Q0">
    <property type="molecule type" value="protein"/>
</dbReference>
<dbReference type="Bgee" id="ENSG00000050426">
    <property type="expression patterns" value="Expressed in body of pancreas and 197 other cell types or tissues"/>
</dbReference>
<dbReference type="ExpressionAtlas" id="Q6P1Q0">
    <property type="expression patterns" value="baseline and differential"/>
</dbReference>
<dbReference type="GO" id="GO:0005743">
    <property type="term" value="C:mitochondrial inner membrane"/>
    <property type="evidence" value="ECO:0007669"/>
    <property type="project" value="UniProtKB-SubCell"/>
</dbReference>
<dbReference type="GO" id="GO:0005741">
    <property type="term" value="C:mitochondrial outer membrane"/>
    <property type="evidence" value="ECO:0007669"/>
    <property type="project" value="UniProtKB-SubCell"/>
</dbReference>
<dbReference type="GO" id="GO:0005739">
    <property type="term" value="C:mitochondrion"/>
    <property type="evidence" value="ECO:0000314"/>
    <property type="project" value="HPA"/>
</dbReference>
<dbReference type="GO" id="GO:0005730">
    <property type="term" value="C:nucleolus"/>
    <property type="evidence" value="ECO:0000314"/>
    <property type="project" value="HPA"/>
</dbReference>
<dbReference type="GO" id="GO:0005654">
    <property type="term" value="C:nucleoplasm"/>
    <property type="evidence" value="ECO:0000314"/>
    <property type="project" value="HPA"/>
</dbReference>
<dbReference type="GO" id="GO:0005634">
    <property type="term" value="C:nucleus"/>
    <property type="evidence" value="ECO:0000250"/>
    <property type="project" value="UniProt"/>
</dbReference>
<dbReference type="GO" id="GO:0060090">
    <property type="term" value="F:molecular adaptor activity"/>
    <property type="evidence" value="ECO:0000250"/>
    <property type="project" value="UniProt"/>
</dbReference>
<dbReference type="GO" id="GO:0043022">
    <property type="term" value="F:ribosome binding"/>
    <property type="evidence" value="ECO:0007669"/>
    <property type="project" value="InterPro"/>
</dbReference>
<dbReference type="GO" id="GO:0006754">
    <property type="term" value="P:ATP biosynthetic process"/>
    <property type="evidence" value="ECO:0007669"/>
    <property type="project" value="Ensembl"/>
</dbReference>
<dbReference type="GO" id="GO:0010467">
    <property type="term" value="P:gene expression"/>
    <property type="evidence" value="ECO:0007669"/>
    <property type="project" value="Ensembl"/>
</dbReference>
<dbReference type="GO" id="GO:0006954">
    <property type="term" value="P:inflammatory response"/>
    <property type="evidence" value="ECO:0007669"/>
    <property type="project" value="Ensembl"/>
</dbReference>
<dbReference type="GO" id="GO:0051560">
    <property type="term" value="P:mitochondrial calcium ion homeostasis"/>
    <property type="evidence" value="ECO:0007669"/>
    <property type="project" value="Ensembl"/>
</dbReference>
<dbReference type="GO" id="GO:0007005">
    <property type="term" value="P:mitochondrion organization"/>
    <property type="evidence" value="ECO:0000250"/>
    <property type="project" value="UniProtKB"/>
</dbReference>
<dbReference type="GO" id="GO:0038061">
    <property type="term" value="P:non-canonical NF-kappaB signal transduction"/>
    <property type="evidence" value="ECO:0007669"/>
    <property type="project" value="Ensembl"/>
</dbReference>
<dbReference type="GO" id="GO:0006909">
    <property type="term" value="P:phagocytosis"/>
    <property type="evidence" value="ECO:0007669"/>
    <property type="project" value="Ensembl"/>
</dbReference>
<dbReference type="GO" id="GO:0120162">
    <property type="term" value="P:positive regulation of cold-induced thermogenesis"/>
    <property type="evidence" value="ECO:0000250"/>
    <property type="project" value="UniProt"/>
</dbReference>
<dbReference type="GO" id="GO:1903409">
    <property type="term" value="P:reactive oxygen species biosynthetic process"/>
    <property type="evidence" value="ECO:0007669"/>
    <property type="project" value="Ensembl"/>
</dbReference>
<dbReference type="GO" id="GO:0050727">
    <property type="term" value="P:regulation of inflammatory response"/>
    <property type="evidence" value="ECO:0000315"/>
    <property type="project" value="UniProtKB"/>
</dbReference>
<dbReference type="GO" id="GO:0050764">
    <property type="term" value="P:regulation of phagocytosis"/>
    <property type="evidence" value="ECO:0000315"/>
    <property type="project" value="UniProtKB"/>
</dbReference>
<dbReference type="GO" id="GO:0032496">
    <property type="term" value="P:response to lipopolysaccharide"/>
    <property type="evidence" value="ECO:0007669"/>
    <property type="project" value="Ensembl"/>
</dbReference>
<dbReference type="GO" id="GO:0034142">
    <property type="term" value="P:toll-like receptor 4 signaling pathway"/>
    <property type="evidence" value="ECO:0007669"/>
    <property type="project" value="Ensembl"/>
</dbReference>
<dbReference type="InterPro" id="IPR033122">
    <property type="entry name" value="LETM1-like_RBD"/>
</dbReference>
<dbReference type="InterPro" id="IPR044202">
    <property type="entry name" value="LETM1/MDM38-like"/>
</dbReference>
<dbReference type="PANTHER" id="PTHR14009:SF13">
    <property type="entry name" value="LETM1 DOMAIN-CONTAINING PROTEIN 1"/>
    <property type="match status" value="1"/>
</dbReference>
<dbReference type="PANTHER" id="PTHR14009">
    <property type="entry name" value="LEUCINE ZIPPER-EF-HAND CONTAINING TRANSMEMBRANE PROTEIN"/>
    <property type="match status" value="1"/>
</dbReference>
<dbReference type="Pfam" id="PF07766">
    <property type="entry name" value="LETM1_RBD"/>
    <property type="match status" value="1"/>
</dbReference>
<dbReference type="PROSITE" id="PS51758">
    <property type="entry name" value="LETM1_RBD"/>
    <property type="match status" value="1"/>
</dbReference>
<protein>
    <recommendedName>
        <fullName evidence="15">LETM1 domain-containing protein 1</fullName>
    </recommendedName>
    <alternativeName>
        <fullName>Cervical cancer 1 proto-oncogene protein p40</fullName>
    </alternativeName>
    <alternativeName>
        <fullName>Cervical cancer proto-oncogene 2 protein</fullName>
    </alternativeName>
    <alternativeName>
        <fullName>HCCR-1</fullName>
    </alternativeName>
    <alternativeName>
        <fullName>HCRR-2</fullName>
    </alternativeName>
</protein>
<comment type="function">
    <text evidence="1">Plays an essential role for mitochondrial structure and function, as well as thermogenesis of brown adipocytes. In brown adipose tissue also localizes in the nucleus where it interacts with the chromatin remodeler SMARCA4 to regulate thermogenic genes expression, such as UCP1 (By similarity). May regulate phagocytosis and inflammatory responses to lipopolysaccharide in macrophages (PubMed:31980577). Involved in tumorigenesis and may function as a negative regulator of the p53/TP53 (PubMed:12879013).</text>
</comment>
<comment type="subunit">
    <text evidence="1 5">Interacts with BRI3BP (PubMed:17943721). Interacts (via C-terminal) with SMARCA4; the interaction regulates transcriptional expression of thermogenic genes in brown adipose tissue (By similarity).</text>
</comment>
<comment type="interaction">
    <interactant intactId="EBI-1549822">
        <id>Q6P1Q0</id>
    </interactant>
    <interactant intactId="EBI-1220105">
        <id>P02654</id>
        <label>APOC1</label>
    </interactant>
    <organismsDiffer>false</organismsDiffer>
    <experiments>3</experiments>
</comment>
<comment type="interaction">
    <interactant intactId="EBI-1549822">
        <id>Q6P1Q0</id>
    </interactant>
    <interactant intactId="EBI-18302142">
        <id>P55056</id>
        <label>APOC4</label>
    </interactant>
    <organismsDiffer>false</organismsDiffer>
    <experiments>3</experiments>
</comment>
<comment type="interaction">
    <interactant intactId="EBI-1549822">
        <id>Q6P1Q0</id>
    </interactant>
    <interactant intactId="EBI-359348">
        <id>Q8WY22</id>
        <label>BRI3BP</label>
    </interactant>
    <organismsDiffer>false</organismsDiffer>
    <experiments>4</experiments>
</comment>
<comment type="interaction">
    <interactant intactId="EBI-1549822">
        <id>Q6P1Q0</id>
    </interactant>
    <interactant intactId="EBI-1549827">
        <id>Q00765</id>
        <label>REEP5</label>
    </interactant>
    <organismsDiffer>false</organismsDiffer>
    <experiments>3</experiments>
</comment>
<comment type="interaction">
    <interactant intactId="EBI-1549822">
        <id>Q6P1Q0</id>
    </interactant>
    <interactant intactId="EBI-17589229">
        <id>Q6NTF9-3</id>
        <label>RHBDD2</label>
    </interactant>
    <organismsDiffer>false</organismsDiffer>
    <experiments>3</experiments>
</comment>
<comment type="interaction">
    <interactant intactId="EBI-1549822">
        <id>Q6P1Q0</id>
    </interactant>
    <interactant intactId="EBI-17684533">
        <id>Q9NRX6</id>
        <label>TMEM167B</label>
    </interactant>
    <organismsDiffer>false</organismsDiffer>
    <experiments>3</experiments>
</comment>
<comment type="subcellular location">
    <subcellularLocation>
        <location evidence="5 7">Mitochondrion outer membrane</location>
        <topology evidence="7">Single-pass membrane protein</topology>
    </subcellularLocation>
    <subcellularLocation>
        <location evidence="1">Nucleus</location>
    </subcellularLocation>
    <subcellularLocation>
        <location evidence="1">Mitochondrion inner membrane</location>
        <topology evidence="2">Single-pass membrane protein</topology>
    </subcellularLocation>
</comment>
<comment type="alternative products">
    <event type="alternative splicing"/>
    <isoform>
        <id>Q6P1Q0-1</id>
        <name>1</name>
        <name>HCCR-1</name>
        <sequence type="displayed"/>
    </isoform>
    <isoform>
        <id>Q6P1Q0-2</id>
        <name>2</name>
        <name>HCRR-2</name>
        <sequence type="described" ref="VSP_029275"/>
    </isoform>
    <isoform>
        <id>Q6P1Q0-3</id>
        <name>3</name>
        <sequence type="described" ref="VSP_029276 VSP_029279"/>
    </isoform>
    <isoform>
        <id>Q6P1Q0-4</id>
        <name>4</name>
        <sequence type="described" ref="VSP_029274"/>
    </isoform>
    <isoform>
        <id>Q6P1Q0-5</id>
        <name>5</name>
        <sequence type="described" ref="VSP_029273"/>
    </isoform>
    <isoform>
        <id>Q6P1Q0-6</id>
        <name>6</name>
        <sequence type="described" ref="VSP_029277 VSP_029278"/>
    </isoform>
    <isoform>
        <id>Q6P1Q0-7</id>
        <name>7</name>
        <sequence type="described" ref="VSP_045299"/>
    </isoform>
</comment>
<comment type="tissue specificity">
    <text evidence="4">Kidney, liver, skeletal muscle, heart and brain. Overexpressed in various tumors including leukemia, lymphoma, and carcinomas of the breast, kidney, ovary, stomach, colon and uterine cervix.</text>
</comment>
<gene>
    <name evidence="16" type="primary">LETMD1</name>
</gene>
<reference key="1">
    <citation type="journal article" date="2003" name="Oncogene">
        <title>Identification and differential expression of novel human cervical cancer oncogene HCCR-2 in human cancers and its involvement in p53 stabilization.</title>
        <authorList>
            <person name="Ko J."/>
            <person name="Lee Y.H."/>
            <person name="Hwang S.Y."/>
            <person name="Lee Y.S."/>
            <person name="Shin S.M."/>
            <person name="Hwang J.H."/>
            <person name="Kim J."/>
            <person name="Kim Y.W."/>
            <person name="Jang S.-W."/>
            <person name="Ryoo Z.Y."/>
            <person name="Kim I.-K."/>
            <person name="Namkoong S.E."/>
            <person name="Kim J.W."/>
        </authorList>
    </citation>
    <scope>NUCLEOTIDE SEQUENCE [MRNA] (ISOFORMS 1 AND 2)</scope>
    <scope>VARIANT ILE-84</scope>
    <scope>FUNCTION</scope>
    <scope>TISSUE SPECIFICITY</scope>
    <source>
        <tissue>Lung</tissue>
    </source>
</reference>
<reference key="2">
    <citation type="submission" date="2003-02" db="EMBL/GenBank/DDBJ databases">
        <title>4-1BB-mediated inducible gene.</title>
        <authorList>
            <person name="Kang S.W."/>
            <person name="Kwon B.S."/>
        </authorList>
    </citation>
    <scope>NUCLEOTIDE SEQUENCE [MRNA] (ISOFORMS 3 AND 6)</scope>
    <scope>VARIANT ILE-84</scope>
</reference>
<reference key="3">
    <citation type="submission" date="2000-12" db="EMBL/GenBank/DDBJ databases">
        <title>Cloning and characterization of a novel gene 507e08.</title>
        <authorList>
            <person name="Mao Y."/>
            <person name="Xie Y."/>
            <person name="Qi Z."/>
        </authorList>
    </citation>
    <scope>NUCLEOTIDE SEQUENCE [LARGE SCALE MRNA] (ISOFORM 4)</scope>
    <source>
        <tissue>Brain</tissue>
    </source>
</reference>
<reference key="4">
    <citation type="journal article" date="2004" name="Nat. Genet.">
        <title>Complete sequencing and characterization of 21,243 full-length human cDNAs.</title>
        <authorList>
            <person name="Ota T."/>
            <person name="Suzuki Y."/>
            <person name="Nishikawa T."/>
            <person name="Otsuki T."/>
            <person name="Sugiyama T."/>
            <person name="Irie R."/>
            <person name="Wakamatsu A."/>
            <person name="Hayashi K."/>
            <person name="Sato H."/>
            <person name="Nagai K."/>
            <person name="Kimura K."/>
            <person name="Makita H."/>
            <person name="Sekine M."/>
            <person name="Obayashi M."/>
            <person name="Nishi T."/>
            <person name="Shibahara T."/>
            <person name="Tanaka T."/>
            <person name="Ishii S."/>
            <person name="Yamamoto J."/>
            <person name="Saito K."/>
            <person name="Kawai Y."/>
            <person name="Isono Y."/>
            <person name="Nakamura Y."/>
            <person name="Nagahari K."/>
            <person name="Murakami K."/>
            <person name="Yasuda T."/>
            <person name="Iwayanagi T."/>
            <person name="Wagatsuma M."/>
            <person name="Shiratori A."/>
            <person name="Sudo H."/>
            <person name="Hosoiri T."/>
            <person name="Kaku Y."/>
            <person name="Kodaira H."/>
            <person name="Kondo H."/>
            <person name="Sugawara M."/>
            <person name="Takahashi M."/>
            <person name="Kanda K."/>
            <person name="Yokoi T."/>
            <person name="Furuya T."/>
            <person name="Kikkawa E."/>
            <person name="Omura Y."/>
            <person name="Abe K."/>
            <person name="Kamihara K."/>
            <person name="Katsuta N."/>
            <person name="Sato K."/>
            <person name="Tanikawa M."/>
            <person name="Yamazaki M."/>
            <person name="Ninomiya K."/>
            <person name="Ishibashi T."/>
            <person name="Yamashita H."/>
            <person name="Murakawa K."/>
            <person name="Fujimori K."/>
            <person name="Tanai H."/>
            <person name="Kimata M."/>
            <person name="Watanabe M."/>
            <person name="Hiraoka S."/>
            <person name="Chiba Y."/>
            <person name="Ishida S."/>
            <person name="Ono Y."/>
            <person name="Takiguchi S."/>
            <person name="Watanabe S."/>
            <person name="Yosida M."/>
            <person name="Hotuta T."/>
            <person name="Kusano J."/>
            <person name="Kanehori K."/>
            <person name="Takahashi-Fujii A."/>
            <person name="Hara H."/>
            <person name="Tanase T.-O."/>
            <person name="Nomura Y."/>
            <person name="Togiya S."/>
            <person name="Komai F."/>
            <person name="Hara R."/>
            <person name="Takeuchi K."/>
            <person name="Arita M."/>
            <person name="Imose N."/>
            <person name="Musashino K."/>
            <person name="Yuuki H."/>
            <person name="Oshima A."/>
            <person name="Sasaki N."/>
            <person name="Aotsuka S."/>
            <person name="Yoshikawa Y."/>
            <person name="Matsunawa H."/>
            <person name="Ichihara T."/>
            <person name="Shiohata N."/>
            <person name="Sano S."/>
            <person name="Moriya S."/>
            <person name="Momiyama H."/>
            <person name="Satoh N."/>
            <person name="Takami S."/>
            <person name="Terashima Y."/>
            <person name="Suzuki O."/>
            <person name="Nakagawa S."/>
            <person name="Senoh A."/>
            <person name="Mizoguchi H."/>
            <person name="Goto Y."/>
            <person name="Shimizu F."/>
            <person name="Wakebe H."/>
            <person name="Hishigaki H."/>
            <person name="Watanabe T."/>
            <person name="Sugiyama A."/>
            <person name="Takemoto M."/>
            <person name="Kawakami B."/>
            <person name="Yamazaki M."/>
            <person name="Watanabe K."/>
            <person name="Kumagai A."/>
            <person name="Itakura S."/>
            <person name="Fukuzumi Y."/>
            <person name="Fujimori Y."/>
            <person name="Komiyama M."/>
            <person name="Tashiro H."/>
            <person name="Tanigami A."/>
            <person name="Fujiwara T."/>
            <person name="Ono T."/>
            <person name="Yamada K."/>
            <person name="Fujii Y."/>
            <person name="Ozaki K."/>
            <person name="Hirao M."/>
            <person name="Ohmori Y."/>
            <person name="Kawabata A."/>
            <person name="Hikiji T."/>
            <person name="Kobatake N."/>
            <person name="Inagaki H."/>
            <person name="Ikema Y."/>
            <person name="Okamoto S."/>
            <person name="Okitani R."/>
            <person name="Kawakami T."/>
            <person name="Noguchi S."/>
            <person name="Itoh T."/>
            <person name="Shigeta K."/>
            <person name="Senba T."/>
            <person name="Matsumura K."/>
            <person name="Nakajima Y."/>
            <person name="Mizuno T."/>
            <person name="Morinaga M."/>
            <person name="Sasaki M."/>
            <person name="Togashi T."/>
            <person name="Oyama M."/>
            <person name="Hata H."/>
            <person name="Watanabe M."/>
            <person name="Komatsu T."/>
            <person name="Mizushima-Sugano J."/>
            <person name="Satoh T."/>
            <person name="Shirai Y."/>
            <person name="Takahashi Y."/>
            <person name="Nakagawa K."/>
            <person name="Okumura K."/>
            <person name="Nagase T."/>
            <person name="Nomura N."/>
            <person name="Kikuchi H."/>
            <person name="Masuho Y."/>
            <person name="Yamashita R."/>
            <person name="Nakai K."/>
            <person name="Yada T."/>
            <person name="Nakamura Y."/>
            <person name="Ohara O."/>
            <person name="Isogai T."/>
            <person name="Sugano S."/>
        </authorList>
    </citation>
    <scope>NUCLEOTIDE SEQUENCE [LARGE SCALE MRNA] (ISOFORM 7)</scope>
</reference>
<reference key="5">
    <citation type="journal article" date="2006" name="Nature">
        <title>The finished DNA sequence of human chromosome 12.</title>
        <authorList>
            <person name="Scherer S.E."/>
            <person name="Muzny D.M."/>
            <person name="Buhay C.J."/>
            <person name="Chen R."/>
            <person name="Cree A."/>
            <person name="Ding Y."/>
            <person name="Dugan-Rocha S."/>
            <person name="Gill R."/>
            <person name="Gunaratne P."/>
            <person name="Harris R.A."/>
            <person name="Hawes A.C."/>
            <person name="Hernandez J."/>
            <person name="Hodgson A.V."/>
            <person name="Hume J."/>
            <person name="Jackson A."/>
            <person name="Khan Z.M."/>
            <person name="Kovar-Smith C."/>
            <person name="Lewis L.R."/>
            <person name="Lozado R.J."/>
            <person name="Metzker M.L."/>
            <person name="Milosavljevic A."/>
            <person name="Miner G.R."/>
            <person name="Montgomery K.T."/>
            <person name="Morgan M.B."/>
            <person name="Nazareth L.V."/>
            <person name="Scott G."/>
            <person name="Sodergren E."/>
            <person name="Song X.-Z."/>
            <person name="Steffen D."/>
            <person name="Lovering R.C."/>
            <person name="Wheeler D.A."/>
            <person name="Worley K.C."/>
            <person name="Yuan Y."/>
            <person name="Zhang Z."/>
            <person name="Adams C.Q."/>
            <person name="Ansari-Lari M.A."/>
            <person name="Ayele M."/>
            <person name="Brown M.J."/>
            <person name="Chen G."/>
            <person name="Chen Z."/>
            <person name="Clerc-Blankenburg K.P."/>
            <person name="Davis C."/>
            <person name="Delgado O."/>
            <person name="Dinh H.H."/>
            <person name="Draper H."/>
            <person name="Gonzalez-Garay M.L."/>
            <person name="Havlak P."/>
            <person name="Jackson L.R."/>
            <person name="Jacob L.S."/>
            <person name="Kelly S.H."/>
            <person name="Li L."/>
            <person name="Li Z."/>
            <person name="Liu J."/>
            <person name="Liu W."/>
            <person name="Lu J."/>
            <person name="Maheshwari M."/>
            <person name="Nguyen B.-V."/>
            <person name="Okwuonu G.O."/>
            <person name="Pasternak S."/>
            <person name="Perez L.M."/>
            <person name="Plopper F.J.H."/>
            <person name="Santibanez J."/>
            <person name="Shen H."/>
            <person name="Tabor P.E."/>
            <person name="Verduzco D."/>
            <person name="Waldron L."/>
            <person name="Wang Q."/>
            <person name="Williams G.A."/>
            <person name="Zhang J."/>
            <person name="Zhou J."/>
            <person name="Allen C.C."/>
            <person name="Amin A.G."/>
            <person name="Anyalebechi V."/>
            <person name="Bailey M."/>
            <person name="Barbaria J.A."/>
            <person name="Bimage K.E."/>
            <person name="Bryant N.P."/>
            <person name="Burch P.E."/>
            <person name="Burkett C.E."/>
            <person name="Burrell K.L."/>
            <person name="Calderon E."/>
            <person name="Cardenas V."/>
            <person name="Carter K."/>
            <person name="Casias K."/>
            <person name="Cavazos I."/>
            <person name="Cavazos S.R."/>
            <person name="Ceasar H."/>
            <person name="Chacko J."/>
            <person name="Chan S.N."/>
            <person name="Chavez D."/>
            <person name="Christopoulos C."/>
            <person name="Chu J."/>
            <person name="Cockrell R."/>
            <person name="Cox C.D."/>
            <person name="Dang M."/>
            <person name="Dathorne S.R."/>
            <person name="David R."/>
            <person name="Davis C.M."/>
            <person name="Davy-Carroll L."/>
            <person name="Deshazo D.R."/>
            <person name="Donlin J.E."/>
            <person name="D'Souza L."/>
            <person name="Eaves K.A."/>
            <person name="Egan A."/>
            <person name="Emery-Cohen A.J."/>
            <person name="Escotto M."/>
            <person name="Flagg N."/>
            <person name="Forbes L.D."/>
            <person name="Gabisi A.M."/>
            <person name="Garza M."/>
            <person name="Hamilton C."/>
            <person name="Henderson N."/>
            <person name="Hernandez O."/>
            <person name="Hines S."/>
            <person name="Hogues M.E."/>
            <person name="Huang M."/>
            <person name="Idlebird D.G."/>
            <person name="Johnson R."/>
            <person name="Jolivet A."/>
            <person name="Jones S."/>
            <person name="Kagan R."/>
            <person name="King L.M."/>
            <person name="Leal B."/>
            <person name="Lebow H."/>
            <person name="Lee S."/>
            <person name="LeVan J.M."/>
            <person name="Lewis L.C."/>
            <person name="London P."/>
            <person name="Lorensuhewa L.M."/>
            <person name="Loulseged H."/>
            <person name="Lovett D.A."/>
            <person name="Lucier A."/>
            <person name="Lucier R.L."/>
            <person name="Ma J."/>
            <person name="Madu R.C."/>
            <person name="Mapua P."/>
            <person name="Martindale A.D."/>
            <person name="Martinez E."/>
            <person name="Massey E."/>
            <person name="Mawhiney S."/>
            <person name="Meador M.G."/>
            <person name="Mendez S."/>
            <person name="Mercado C."/>
            <person name="Mercado I.C."/>
            <person name="Merritt C.E."/>
            <person name="Miner Z.L."/>
            <person name="Minja E."/>
            <person name="Mitchell T."/>
            <person name="Mohabbat F."/>
            <person name="Mohabbat K."/>
            <person name="Montgomery B."/>
            <person name="Moore N."/>
            <person name="Morris S."/>
            <person name="Munidasa M."/>
            <person name="Ngo R.N."/>
            <person name="Nguyen N.B."/>
            <person name="Nickerson E."/>
            <person name="Nwaokelemeh O.O."/>
            <person name="Nwokenkwo S."/>
            <person name="Obregon M."/>
            <person name="Oguh M."/>
            <person name="Oragunye N."/>
            <person name="Oviedo R.J."/>
            <person name="Parish B.J."/>
            <person name="Parker D.N."/>
            <person name="Parrish J."/>
            <person name="Parks K.L."/>
            <person name="Paul H.A."/>
            <person name="Payton B.A."/>
            <person name="Perez A."/>
            <person name="Perrin W."/>
            <person name="Pickens A."/>
            <person name="Primus E.L."/>
            <person name="Pu L.-L."/>
            <person name="Puazo M."/>
            <person name="Quiles M.M."/>
            <person name="Quiroz J.B."/>
            <person name="Rabata D."/>
            <person name="Reeves K."/>
            <person name="Ruiz S.J."/>
            <person name="Shao H."/>
            <person name="Sisson I."/>
            <person name="Sonaike T."/>
            <person name="Sorelle R.P."/>
            <person name="Sutton A.E."/>
            <person name="Svatek A.F."/>
            <person name="Svetz L.A."/>
            <person name="Tamerisa K.S."/>
            <person name="Taylor T.R."/>
            <person name="Teague B."/>
            <person name="Thomas N."/>
            <person name="Thorn R.D."/>
            <person name="Trejos Z.Y."/>
            <person name="Trevino B.K."/>
            <person name="Ukegbu O.N."/>
            <person name="Urban J.B."/>
            <person name="Vasquez L.I."/>
            <person name="Vera V.A."/>
            <person name="Villasana D.M."/>
            <person name="Wang L."/>
            <person name="Ward-Moore S."/>
            <person name="Warren J.T."/>
            <person name="Wei X."/>
            <person name="White F."/>
            <person name="Williamson A.L."/>
            <person name="Wleczyk R."/>
            <person name="Wooden H.S."/>
            <person name="Wooden S.H."/>
            <person name="Yen J."/>
            <person name="Yoon L."/>
            <person name="Yoon V."/>
            <person name="Zorrilla S.E."/>
            <person name="Nelson D."/>
            <person name="Kucherlapati R."/>
            <person name="Weinstock G."/>
            <person name="Gibbs R.A."/>
        </authorList>
    </citation>
    <scope>NUCLEOTIDE SEQUENCE [LARGE SCALE GENOMIC DNA]</scope>
</reference>
<reference key="6">
    <citation type="submission" date="2005-07" db="EMBL/GenBank/DDBJ databases">
        <authorList>
            <person name="Mural R.J."/>
            <person name="Istrail S."/>
            <person name="Sutton G.G."/>
            <person name="Florea L."/>
            <person name="Halpern A.L."/>
            <person name="Mobarry C.M."/>
            <person name="Lippert R."/>
            <person name="Walenz B."/>
            <person name="Shatkay H."/>
            <person name="Dew I."/>
            <person name="Miller J.R."/>
            <person name="Flanigan M.J."/>
            <person name="Edwards N.J."/>
            <person name="Bolanos R."/>
            <person name="Fasulo D."/>
            <person name="Halldorsson B.V."/>
            <person name="Hannenhalli S."/>
            <person name="Turner R."/>
            <person name="Yooseph S."/>
            <person name="Lu F."/>
            <person name="Nusskern D.R."/>
            <person name="Shue B.C."/>
            <person name="Zheng X.H."/>
            <person name="Zhong F."/>
            <person name="Delcher A.L."/>
            <person name="Huson D.H."/>
            <person name="Kravitz S.A."/>
            <person name="Mouchard L."/>
            <person name="Reinert K."/>
            <person name="Remington K.A."/>
            <person name="Clark A.G."/>
            <person name="Waterman M.S."/>
            <person name="Eichler E.E."/>
            <person name="Adams M.D."/>
            <person name="Hunkapiller M.W."/>
            <person name="Myers E.W."/>
            <person name="Venter J.C."/>
        </authorList>
    </citation>
    <scope>NUCLEOTIDE SEQUENCE [LARGE SCALE GENOMIC DNA]</scope>
</reference>
<reference key="7">
    <citation type="journal article" date="2004" name="Genome Res.">
        <title>The status, quality, and expansion of the NIH full-length cDNA project: the Mammalian Gene Collection (MGC).</title>
        <authorList>
            <consortium name="The MGC Project Team"/>
        </authorList>
    </citation>
    <scope>NUCLEOTIDE SEQUENCE [LARGE SCALE MRNA] (ISOFORMS 1 AND 5)</scope>
    <source>
        <tissue>Lung</tissue>
    </source>
</reference>
<reference key="8">
    <citation type="journal article" date="2007" name="BMC Genomics">
        <title>The full-ORF clone resource of the German cDNA consortium.</title>
        <authorList>
            <person name="Bechtel S."/>
            <person name="Rosenfelder H."/>
            <person name="Duda A."/>
            <person name="Schmidt C.P."/>
            <person name="Ernst U."/>
            <person name="Wellenreuther R."/>
            <person name="Mehrle A."/>
            <person name="Schuster C."/>
            <person name="Bahr A."/>
            <person name="Bloecker H."/>
            <person name="Heubner D."/>
            <person name="Hoerlein A."/>
            <person name="Michel G."/>
            <person name="Wedler H."/>
            <person name="Koehrer K."/>
            <person name="Ottenwaelder B."/>
            <person name="Poustka A."/>
            <person name="Wiemann S."/>
            <person name="Schupp I."/>
        </authorList>
    </citation>
    <scope>NUCLEOTIDE SEQUENCE [LARGE SCALE MRNA] OF 41-336 (ISOFORM 3)</scope>
    <scope>VARIANT ILE-84</scope>
    <source>
        <tissue>Uterus</tissue>
    </source>
</reference>
<reference key="9">
    <citation type="journal article" date="2007" name="BMC Cell Biol.">
        <title>HCCR-1, a novel oncogene, encodes a mitochondrial outer membrane protein and suppresses the UVC-induced apoptosis.</title>
        <authorList>
            <person name="Cho G.W."/>
            <person name="Shin S.M."/>
            <person name="Kim H.K."/>
            <person name="Ha S.A."/>
            <person name="Kim S."/>
            <person name="Yoon J.H."/>
            <person name="Hur S.Y."/>
            <person name="Kim T.E."/>
            <person name="Kim J.W."/>
        </authorList>
    </citation>
    <scope>SUBCELLULAR LOCATION</scope>
    <scope>MEMBRANE TOPOLOGY</scope>
</reference>
<reference key="10">
    <citation type="journal article" date="2008" name="Int. J. Cancer">
        <title>HCCRBP-1 directly interacting with HCCR-1 induces tumorigenesis through P53 stabilization.</title>
        <authorList>
            <person name="Ha S.A."/>
            <person name="Shin S.M."/>
            <person name="Lee Y.J."/>
            <person name="Kim S."/>
            <person name="Kim H.K."/>
            <person name="Namkoong H."/>
            <person name="Lee H."/>
            <person name="Lee Y.S."/>
            <person name="Cho Y.S."/>
            <person name="Park Y.G."/>
            <person name="Jeon H.M."/>
            <person name="Oh C."/>
            <person name="Kim J.W."/>
        </authorList>
    </citation>
    <scope>SUBCELLULAR LOCATION</scope>
    <scope>PROTO-ONCOGENICITY</scope>
    <scope>INTERACTION WITH BRI3BP</scope>
</reference>
<reference key="11">
    <citation type="journal article" date="2020" name="J. Immunol.">
        <title>LETMD1 Regulates Phagocytosis and Inflammatory Responses to Lipopolysaccharide via Reactive Oxygen Species Generation and NF-kappaB Activation in Macrophages.</title>
        <authorList>
            <person name="Lim S.G."/>
            <person name="Suk K."/>
            <person name="Lee W.H."/>
        </authorList>
    </citation>
    <scope>FUNCTION</scope>
</reference>
<organism>
    <name type="scientific">Homo sapiens</name>
    <name type="common">Human</name>
    <dbReference type="NCBI Taxonomy" id="9606"/>
    <lineage>
        <taxon>Eukaryota</taxon>
        <taxon>Metazoa</taxon>
        <taxon>Chordata</taxon>
        <taxon>Craniata</taxon>
        <taxon>Vertebrata</taxon>
        <taxon>Euteleostomi</taxon>
        <taxon>Mammalia</taxon>
        <taxon>Eutheria</taxon>
        <taxon>Euarchontoglires</taxon>
        <taxon>Primates</taxon>
        <taxon>Haplorrhini</taxon>
        <taxon>Catarrhini</taxon>
        <taxon>Hominidae</taxon>
        <taxon>Homo</taxon>
    </lineage>
</organism>
<evidence type="ECO:0000250" key="1">
    <source>
        <dbReference type="UniProtKB" id="Q924L1"/>
    </source>
</evidence>
<evidence type="ECO:0000255" key="2"/>
<evidence type="ECO:0000255" key="3">
    <source>
        <dbReference type="PROSITE-ProRule" id="PRU01094"/>
    </source>
</evidence>
<evidence type="ECO:0000269" key="4">
    <source>
    </source>
</evidence>
<evidence type="ECO:0000269" key="5">
    <source>
    </source>
</evidence>
<evidence type="ECO:0000269" key="6">
    <source>
    </source>
</evidence>
<evidence type="ECO:0000269" key="7">
    <source>
    </source>
</evidence>
<evidence type="ECO:0000269" key="8">
    <source ref="2"/>
</evidence>
<evidence type="ECO:0000303" key="9">
    <source>
    </source>
</evidence>
<evidence type="ECO:0000303" key="10">
    <source>
    </source>
</evidence>
<evidence type="ECO:0000303" key="11">
    <source>
    </source>
</evidence>
<evidence type="ECO:0000303" key="12">
    <source>
    </source>
</evidence>
<evidence type="ECO:0000303" key="13">
    <source ref="2"/>
</evidence>
<evidence type="ECO:0000303" key="14">
    <source ref="3"/>
</evidence>
<evidence type="ECO:0000305" key="15"/>
<evidence type="ECO:0000312" key="16">
    <source>
        <dbReference type="HGNC" id="HGNC:24241"/>
    </source>
</evidence>
<accession>Q6P1Q0</accession>
<accession>A6NER7</accession>
<accession>B3KXK7</accession>
<accession>Q6X2E4</accession>
<accession>Q6X2E5</accession>
<accession>Q7L2G9</accession>
<accession>Q7L690</accession>
<accession>Q8WXW6</accession>
<accession>Q96PK7</accession>
<accession>Q9BY59</accession>
<accession>Q9Y3X3</accession>
<sequence>MALSRVCWARSAVWGSAVTPGHFVTRRLQLGRSGLAWGAPRSSKLHLSPKADVKNLMSYVVTKTKAINGKYHRFLGRHFPRFYVLYTIFMKGLQMLWADAKKARRIKTNMWKHNIKFHQLPYREMEHLRQFRQDVTKCLFLGIISIPPFANYLVFLLMYLFPRQLLIRHFWTPKQQTDFLDIYHAFRKQSHPEIISYLEKVIPLISDAGLRWRLTDLCTKIQRGTHPAIHDILALRECFSNHPLGMNQLQALHVKALSRAMLLTSYLPPPLLRHRLKTHTTVIHQLDKALAKLGIGQLTAQEVKSACYLRGLNSTHIGEDRCRTWLGEWLQISCSLKEAELSLLLHNVVLLSTNYLGTRR</sequence>
<name>LTMD1_HUMAN</name>
<keyword id="KW-0025">Alternative splicing</keyword>
<keyword id="KW-0472">Membrane</keyword>
<keyword id="KW-0496">Mitochondrion</keyword>
<keyword id="KW-0999">Mitochondrion inner membrane</keyword>
<keyword id="KW-1000">Mitochondrion outer membrane</keyword>
<keyword id="KW-0539">Nucleus</keyword>
<keyword id="KW-1267">Proteomics identification</keyword>
<keyword id="KW-0656">Proto-oncogene</keyword>
<keyword id="KW-1185">Reference proteome</keyword>
<keyword id="KW-0812">Transmembrane</keyword>
<keyword id="KW-1133">Transmembrane helix</keyword>
<feature type="chain" id="PRO_0000310419" description="LETM1 domain-containing protein 1">
    <location>
        <begin position="1"/>
        <end position="360"/>
    </location>
</feature>
<feature type="topological domain" description="Cytoplasmic" evidence="2">
    <location>
        <begin position="1"/>
        <end position="137"/>
    </location>
</feature>
<feature type="transmembrane region" description="Helical" evidence="2">
    <location>
        <begin position="138"/>
        <end position="158"/>
    </location>
</feature>
<feature type="topological domain" description="Mitochondrial intermembrane" evidence="2">
    <location>
        <begin position="159"/>
        <end position="360"/>
    </location>
</feature>
<feature type="domain" description="Letm1 RBD" evidence="3">
    <location>
        <begin position="186"/>
        <end position="360"/>
    </location>
</feature>
<feature type="region of interest" description="Required and sufficient for mitochondrial import">
    <location>
        <begin position="1"/>
        <end position="110"/>
    </location>
</feature>
<feature type="splice variant" id="VSP_029273" description="In isoform 5." evidence="11">
    <location>
        <begin position="1"/>
        <end position="260"/>
    </location>
</feature>
<feature type="splice variant" id="VSP_029274" description="In isoform 4." evidence="14">
    <location>
        <begin position="1"/>
        <end position="157"/>
    </location>
</feature>
<feature type="splice variant" id="VSP_029275" description="In isoform 2." evidence="9">
    <location>
        <begin position="1"/>
        <end position="56"/>
    </location>
</feature>
<feature type="splice variant" id="VSP_029276" description="In isoform 3." evidence="12 13">
    <original>GLQMLWADAKKARRIKTNMWKHNIKFHQLPYREMEHLRQFRQDVTKCLFLGIISIPPFANYLVF</original>
    <variation>ESLEPGHASHILPASSLVETSFEDSYNCDSPTGQGFGKAGDWPADCSGSKIGLLSPWPEFYAYW</variation>
    <location>
        <begin position="92"/>
        <end position="155"/>
    </location>
</feature>
<feature type="splice variant" id="VSP_029277" description="In isoform 6." evidence="13">
    <original>LQMLWAD</original>
    <variation>TCFPGNY</variation>
    <location>
        <begin position="93"/>
        <end position="99"/>
    </location>
</feature>
<feature type="splice variant" id="VSP_029278" description="In isoform 6." evidence="13">
    <location>
        <begin position="100"/>
        <end position="360"/>
    </location>
</feature>
<feature type="splice variant" id="VSP_045299" description="In isoform 7." evidence="10">
    <original>Q</original>
    <variation>QVWARGRYPEVHGE</variation>
    <location>
        <position position="130"/>
    </location>
</feature>
<feature type="splice variant" id="VSP_029279" description="In isoform 3." evidence="12 13">
    <location>
        <begin position="156"/>
        <end position="360"/>
    </location>
</feature>
<feature type="sequence variant" id="VAR_037033" description="In dbSNP:rs12379." evidence="4 6 8">
    <original>V</original>
    <variation>I</variation>
    <location>
        <position position="84"/>
    </location>
</feature>
<feature type="sequence conflict" description="In Ref. 2; AAP85625." evidence="15" ref="2">
    <original>I</original>
    <variation>T</variation>
    <location>
        <position position="88"/>
    </location>
</feature>
<proteinExistence type="evidence at protein level"/>